<feature type="chain" id="PRO_0000097131" description="Quinoline 2-oxidoreductase gamma chain">
    <location>
        <begin position="1"/>
        <end position="10" status="greater than"/>
    </location>
</feature>
<feature type="non-terminal residue">
    <location>
        <position position="10"/>
    </location>
</feature>
<accession>P80466</accession>
<name>Q2OG_COMTE</name>
<sequence>MIQAEKNPXL</sequence>
<protein>
    <recommendedName>
        <fullName>Quinoline 2-oxidoreductase gamma chain</fullName>
        <ecNumber evidence="1">1.3.99.17</ecNumber>
    </recommendedName>
</protein>
<dbReference type="EC" id="1.3.99.17" evidence="1"/>
<dbReference type="UniPathway" id="UPA00239"/>
<dbReference type="GO" id="GO:0051537">
    <property type="term" value="F:2 iron, 2 sulfur cluster binding"/>
    <property type="evidence" value="ECO:0007669"/>
    <property type="project" value="UniProtKB-KW"/>
</dbReference>
<dbReference type="GO" id="GO:0046872">
    <property type="term" value="F:metal ion binding"/>
    <property type="evidence" value="ECO:0007669"/>
    <property type="project" value="UniProtKB-KW"/>
</dbReference>
<dbReference type="GO" id="GO:0018523">
    <property type="term" value="F:quinoline 2-oxidoreductase activity"/>
    <property type="evidence" value="ECO:0007669"/>
    <property type="project" value="UniProtKB-EC"/>
</dbReference>
<organism>
    <name type="scientific">Comamonas testosteroni</name>
    <name type="common">Pseudomonas testosteroni</name>
    <dbReference type="NCBI Taxonomy" id="285"/>
    <lineage>
        <taxon>Bacteria</taxon>
        <taxon>Pseudomonadati</taxon>
        <taxon>Pseudomonadota</taxon>
        <taxon>Betaproteobacteria</taxon>
        <taxon>Burkholderiales</taxon>
        <taxon>Comamonadaceae</taxon>
        <taxon>Comamonas</taxon>
    </lineage>
</organism>
<comment type="function">
    <text evidence="1">Converts (3-methyl-)-quinoline to (3-methyl-)2-oxo-1,2-dihydroquinoline.</text>
</comment>
<comment type="catalytic activity">
    <reaction evidence="1">
        <text>quinoline + A + H2O = quinolin-2(1H)-one + AH2</text>
        <dbReference type="Rhea" id="RHEA:17749"/>
        <dbReference type="ChEBI" id="CHEBI:13193"/>
        <dbReference type="ChEBI" id="CHEBI:15377"/>
        <dbReference type="ChEBI" id="CHEBI:17362"/>
        <dbReference type="ChEBI" id="CHEBI:17499"/>
        <dbReference type="ChEBI" id="CHEBI:18289"/>
        <dbReference type="EC" id="1.3.99.17"/>
    </reaction>
</comment>
<comment type="cofactor">
    <cofactor evidence="1">
        <name>[2Fe-2S] cluster</name>
        <dbReference type="ChEBI" id="CHEBI:190135"/>
    </cofactor>
    <text evidence="1">Binds 2 [2Fe-2S] clusters per subunit.</text>
</comment>
<comment type="pathway">
    <text>Xenobiotic degradation; quinoline degradation.</text>
</comment>
<comment type="subunit">
    <text evidence="2">Heterohexamer of two alpha chains, two beta chains, and two gamma chains.</text>
</comment>
<evidence type="ECO:0000269" key="1">
    <source>
    </source>
</evidence>
<evidence type="ECO:0000305" key="2"/>
<keyword id="KW-0001">2Fe-2S</keyword>
<keyword id="KW-0903">Direct protein sequencing</keyword>
<keyword id="KW-0408">Iron</keyword>
<keyword id="KW-0411">Iron-sulfur</keyword>
<keyword id="KW-0479">Metal-binding</keyword>
<keyword id="KW-0560">Oxidoreductase</keyword>
<reference key="1">
    <citation type="journal article" date="1995" name="Eur. J. Biochem.">
        <title>Quinoline 2-oxidoreductase and 2-oxo-1,2-dihydroquinoline 5,6-dioxygenase from Comamonas testosteroni 63. The first two enzymes in quinoline and 3-methylquinoline degradation.</title>
        <authorList>
            <person name="Schach S."/>
            <person name="Tshisuaka B."/>
            <person name="Fetzner S."/>
            <person name="Lingens F."/>
        </authorList>
    </citation>
    <scope>PROTEIN SEQUENCE</scope>
    <scope>FUNCTION</scope>
    <scope>CATALYTIC ACTIVITY</scope>
    <scope>COFACTOR</scope>
    <source>
        <strain>63</strain>
    </source>
</reference>
<proteinExistence type="evidence at protein level"/>